<reference key="1">
    <citation type="journal article" date="2008" name="J. Bacteriol.">
        <title>Comparative genome sequence analysis of multidrug-resistant Acinetobacter baumannii.</title>
        <authorList>
            <person name="Adams M.D."/>
            <person name="Goglin K."/>
            <person name="Molyneaux N."/>
            <person name="Hujer K.M."/>
            <person name="Lavender H."/>
            <person name="Jamison J.J."/>
            <person name="MacDonald I.J."/>
            <person name="Martin K.M."/>
            <person name="Russo T."/>
            <person name="Campagnari A.A."/>
            <person name="Hujer A.M."/>
            <person name="Bonomo R.A."/>
            <person name="Gill S.R."/>
        </authorList>
    </citation>
    <scope>NUCLEOTIDE SEQUENCE [LARGE SCALE GENOMIC DNA]</scope>
    <source>
        <strain>AB0057</strain>
    </source>
</reference>
<gene>
    <name evidence="2" type="primary">rpsL</name>
    <name type="ordered locus">AB57_0911</name>
</gene>
<name>RS12_ACIB5</name>
<sequence length="124" mass="13766">MATTNQLIRKGRTTLVEKSKVPALKACPQRRGVCTRVYTTTPKKPNSAMRKVCRVRLTSGFEVSSYIGGEGHNLQEHSVVLIRGGRVKDLPGVRYHTVRGSLDCAGVKDRNQSRSKYGAKRPKK</sequence>
<evidence type="ECO:0000250" key="1"/>
<evidence type="ECO:0000255" key="2">
    <source>
        <dbReference type="HAMAP-Rule" id="MF_00403"/>
    </source>
</evidence>
<evidence type="ECO:0000305" key="3"/>
<evidence type="ECO:0007829" key="4">
    <source>
        <dbReference type="PDB" id="7M4U"/>
    </source>
</evidence>
<protein>
    <recommendedName>
        <fullName evidence="2">Small ribosomal subunit protein uS12</fullName>
    </recommendedName>
    <alternativeName>
        <fullName evidence="3">30S ribosomal protein S12</fullName>
    </alternativeName>
</protein>
<comment type="function">
    <text evidence="2">With S4 and S5 plays an important role in translational accuracy.</text>
</comment>
<comment type="function">
    <text evidence="2">Interacts with and stabilizes bases of the 16S rRNA that are involved in tRNA selection in the A site and with the mRNA backbone. Located at the interface of the 30S and 50S subunits, it traverses the body of the 30S subunit contacting proteins on the other side and probably holding the rRNA structure together. The combined cluster of proteins S8, S12 and S17 appears to hold together the shoulder and platform of the 30S subunit.</text>
</comment>
<comment type="subunit">
    <text evidence="2">Part of the 30S ribosomal subunit. Contacts proteins S8 and S17. May interact with IF1 in the 30S initiation complex.</text>
</comment>
<comment type="similarity">
    <text evidence="2">Belongs to the universal ribosomal protein uS12 family.</text>
</comment>
<organism>
    <name type="scientific">Acinetobacter baumannii (strain AB0057)</name>
    <dbReference type="NCBI Taxonomy" id="480119"/>
    <lineage>
        <taxon>Bacteria</taxon>
        <taxon>Pseudomonadati</taxon>
        <taxon>Pseudomonadota</taxon>
        <taxon>Gammaproteobacteria</taxon>
        <taxon>Moraxellales</taxon>
        <taxon>Moraxellaceae</taxon>
        <taxon>Acinetobacter</taxon>
        <taxon>Acinetobacter calcoaceticus/baumannii complex</taxon>
    </lineage>
</organism>
<feature type="chain" id="PRO_1000194103" description="Small ribosomal subunit protein uS12">
    <location>
        <begin position="1"/>
        <end position="124"/>
    </location>
</feature>
<feature type="modified residue" description="3-methylthioaspartic acid" evidence="1">
    <location>
        <position position="89"/>
    </location>
</feature>
<feature type="helix" evidence="4">
    <location>
        <begin position="4"/>
        <end position="9"/>
    </location>
</feature>
<feature type="strand" evidence="4">
    <location>
        <begin position="28"/>
        <end position="40"/>
    </location>
</feature>
<feature type="strand" evidence="4">
    <location>
        <begin position="50"/>
        <end position="57"/>
    </location>
</feature>
<feature type="strand" evidence="4">
    <location>
        <begin position="62"/>
        <end position="66"/>
    </location>
</feature>
<feature type="strand" evidence="4">
    <location>
        <begin position="79"/>
        <end position="84"/>
    </location>
</feature>
<feature type="strand" evidence="4">
    <location>
        <begin position="88"/>
        <end position="90"/>
    </location>
</feature>
<feature type="strand" evidence="4">
    <location>
        <begin position="95"/>
        <end position="97"/>
    </location>
</feature>
<feature type="strand" evidence="4">
    <location>
        <begin position="101"/>
        <end position="104"/>
    </location>
</feature>
<feature type="turn" evidence="4">
    <location>
        <begin position="115"/>
        <end position="118"/>
    </location>
</feature>
<dbReference type="EMBL" id="CP001182">
    <property type="protein sequence ID" value="ACJ40703.1"/>
    <property type="molecule type" value="Genomic_DNA"/>
</dbReference>
<dbReference type="RefSeq" id="WP_000246374.1">
    <property type="nucleotide sequence ID" value="NC_011586.2"/>
</dbReference>
<dbReference type="PDB" id="6V39">
    <property type="method" value="EM"/>
    <property type="resolution" value="3.04 A"/>
    <property type="chains" value="l=1-124"/>
</dbReference>
<dbReference type="PDB" id="6V3A">
    <property type="method" value="EM"/>
    <property type="resolution" value="2.82 A"/>
    <property type="chains" value="l=1-124"/>
</dbReference>
<dbReference type="PDB" id="6V3B">
    <property type="method" value="EM"/>
    <property type="resolution" value="2.91 A"/>
    <property type="chains" value="l=1-124"/>
</dbReference>
<dbReference type="PDB" id="6V3E">
    <property type="method" value="EM"/>
    <property type="resolution" value="4.40 A"/>
    <property type="chains" value="l=1-124"/>
</dbReference>
<dbReference type="PDB" id="7M4U">
    <property type="method" value="EM"/>
    <property type="resolution" value="2.71 A"/>
    <property type="chains" value="l=1-124"/>
</dbReference>
<dbReference type="PDB" id="7M4W">
    <property type="method" value="EM"/>
    <property type="resolution" value="2.55 A"/>
    <property type="chains" value="l=1-124"/>
</dbReference>
<dbReference type="PDB" id="7M4X">
    <property type="method" value="EM"/>
    <property type="resolution" value="2.66 A"/>
    <property type="chains" value="l=1-124"/>
</dbReference>
<dbReference type="PDB" id="7M4Y">
    <property type="method" value="EM"/>
    <property type="resolution" value="2.50 A"/>
    <property type="chains" value="l=1-124"/>
</dbReference>
<dbReference type="PDB" id="7M4Z">
    <property type="method" value="EM"/>
    <property type="resolution" value="2.92 A"/>
    <property type="chains" value="l=1-124"/>
</dbReference>
<dbReference type="PDB" id="7RYF">
    <property type="method" value="EM"/>
    <property type="resolution" value="2.65 A"/>
    <property type="chains" value="l=1-124"/>
</dbReference>
<dbReference type="PDB" id="7RYG">
    <property type="method" value="EM"/>
    <property type="resolution" value="2.38 A"/>
    <property type="chains" value="l=1-124"/>
</dbReference>
<dbReference type="PDB" id="7RYH">
    <property type="method" value="EM"/>
    <property type="resolution" value="2.43 A"/>
    <property type="chains" value="l=1-124"/>
</dbReference>
<dbReference type="PDB" id="7UVV">
    <property type="method" value="EM"/>
    <property type="resolution" value="2.50 A"/>
    <property type="chains" value="l=1-124"/>
</dbReference>
<dbReference type="PDB" id="7UVW">
    <property type="method" value="EM"/>
    <property type="resolution" value="2.37 A"/>
    <property type="chains" value="l=1-124"/>
</dbReference>
<dbReference type="PDB" id="7UVX">
    <property type="method" value="EM"/>
    <property type="resolution" value="2.35 A"/>
    <property type="chains" value="l=1-124"/>
</dbReference>
<dbReference type="PDB" id="7UVY">
    <property type="method" value="EM"/>
    <property type="resolution" value="2.39 A"/>
    <property type="chains" value="l=1-124"/>
</dbReference>
<dbReference type="PDB" id="7UVZ">
    <property type="method" value="EM"/>
    <property type="resolution" value="2.21 A"/>
    <property type="chains" value="l=1-124"/>
</dbReference>
<dbReference type="PDB" id="7UW1">
    <property type="method" value="EM"/>
    <property type="resolution" value="2.21 A"/>
    <property type="chains" value="l=1-124"/>
</dbReference>
<dbReference type="PDBsum" id="6V39"/>
<dbReference type="PDBsum" id="6V3A"/>
<dbReference type="PDBsum" id="6V3B"/>
<dbReference type="PDBsum" id="6V3E"/>
<dbReference type="PDBsum" id="7M4U"/>
<dbReference type="PDBsum" id="7M4W"/>
<dbReference type="PDBsum" id="7M4X"/>
<dbReference type="PDBsum" id="7M4Y"/>
<dbReference type="PDBsum" id="7M4Z"/>
<dbReference type="PDBsum" id="7RYF"/>
<dbReference type="PDBsum" id="7RYG"/>
<dbReference type="PDBsum" id="7RYH"/>
<dbReference type="PDBsum" id="7UVV"/>
<dbReference type="PDBsum" id="7UVW"/>
<dbReference type="PDBsum" id="7UVX"/>
<dbReference type="PDBsum" id="7UVY"/>
<dbReference type="PDBsum" id="7UVZ"/>
<dbReference type="PDBsum" id="7UW1"/>
<dbReference type="EMDB" id="EMD-21030"/>
<dbReference type="EMDB" id="EMD-21031"/>
<dbReference type="EMDB" id="EMD-21032"/>
<dbReference type="EMDB" id="EMD-21034"/>
<dbReference type="EMDB" id="EMD-23666"/>
<dbReference type="EMDB" id="EMD-23668"/>
<dbReference type="EMDB" id="EMD-23669"/>
<dbReference type="EMDB" id="EMD-23670"/>
<dbReference type="EMDB" id="EMD-23671"/>
<dbReference type="EMDB" id="EMD-24738"/>
<dbReference type="EMDB" id="EMD-24739"/>
<dbReference type="EMDB" id="EMD-24740"/>
<dbReference type="EMDB" id="EMD-26817"/>
<dbReference type="EMDB" id="EMD-26818"/>
<dbReference type="EMDB" id="EMD-26819"/>
<dbReference type="EMDB" id="EMD-26820"/>
<dbReference type="EMDB" id="EMD-26821"/>
<dbReference type="EMDB" id="EMD-26822"/>
<dbReference type="SMR" id="B7I7R9"/>
<dbReference type="IntAct" id="B7I7R9">
    <property type="interactions" value="1"/>
</dbReference>
<dbReference type="GeneID" id="92892795"/>
<dbReference type="KEGG" id="abn:AB57_0911"/>
<dbReference type="HOGENOM" id="CLU_104295_1_2_6"/>
<dbReference type="Proteomes" id="UP000007094">
    <property type="component" value="Chromosome"/>
</dbReference>
<dbReference type="GO" id="GO:0015935">
    <property type="term" value="C:small ribosomal subunit"/>
    <property type="evidence" value="ECO:0007669"/>
    <property type="project" value="InterPro"/>
</dbReference>
<dbReference type="GO" id="GO:0019843">
    <property type="term" value="F:rRNA binding"/>
    <property type="evidence" value="ECO:0007669"/>
    <property type="project" value="UniProtKB-UniRule"/>
</dbReference>
<dbReference type="GO" id="GO:0003735">
    <property type="term" value="F:structural constituent of ribosome"/>
    <property type="evidence" value="ECO:0007669"/>
    <property type="project" value="InterPro"/>
</dbReference>
<dbReference type="GO" id="GO:0000049">
    <property type="term" value="F:tRNA binding"/>
    <property type="evidence" value="ECO:0007669"/>
    <property type="project" value="UniProtKB-UniRule"/>
</dbReference>
<dbReference type="GO" id="GO:0006412">
    <property type="term" value="P:translation"/>
    <property type="evidence" value="ECO:0007669"/>
    <property type="project" value="UniProtKB-UniRule"/>
</dbReference>
<dbReference type="CDD" id="cd03368">
    <property type="entry name" value="Ribosomal_S12"/>
    <property type="match status" value="1"/>
</dbReference>
<dbReference type="FunFam" id="2.40.50.140:FF:000001">
    <property type="entry name" value="30S ribosomal protein S12"/>
    <property type="match status" value="1"/>
</dbReference>
<dbReference type="Gene3D" id="2.40.50.140">
    <property type="entry name" value="Nucleic acid-binding proteins"/>
    <property type="match status" value="1"/>
</dbReference>
<dbReference type="HAMAP" id="MF_00403_B">
    <property type="entry name" value="Ribosomal_uS12_B"/>
    <property type="match status" value="1"/>
</dbReference>
<dbReference type="InterPro" id="IPR012340">
    <property type="entry name" value="NA-bd_OB-fold"/>
</dbReference>
<dbReference type="InterPro" id="IPR006032">
    <property type="entry name" value="Ribosomal_uS12"/>
</dbReference>
<dbReference type="InterPro" id="IPR005679">
    <property type="entry name" value="Ribosomal_uS12_bac"/>
</dbReference>
<dbReference type="NCBIfam" id="TIGR00981">
    <property type="entry name" value="rpsL_bact"/>
    <property type="match status" value="1"/>
</dbReference>
<dbReference type="PANTHER" id="PTHR11652">
    <property type="entry name" value="30S RIBOSOMAL PROTEIN S12 FAMILY MEMBER"/>
    <property type="match status" value="1"/>
</dbReference>
<dbReference type="Pfam" id="PF00164">
    <property type="entry name" value="Ribosom_S12_S23"/>
    <property type="match status" value="1"/>
</dbReference>
<dbReference type="PIRSF" id="PIRSF002133">
    <property type="entry name" value="Ribosomal_S12/S23"/>
    <property type="match status" value="1"/>
</dbReference>
<dbReference type="PRINTS" id="PR01034">
    <property type="entry name" value="RIBOSOMALS12"/>
</dbReference>
<dbReference type="SUPFAM" id="SSF50249">
    <property type="entry name" value="Nucleic acid-binding proteins"/>
    <property type="match status" value="1"/>
</dbReference>
<dbReference type="PROSITE" id="PS00055">
    <property type="entry name" value="RIBOSOMAL_S12"/>
    <property type="match status" value="1"/>
</dbReference>
<keyword id="KW-0002">3D-structure</keyword>
<keyword id="KW-0488">Methylation</keyword>
<keyword id="KW-0687">Ribonucleoprotein</keyword>
<keyword id="KW-0689">Ribosomal protein</keyword>
<keyword id="KW-0694">RNA-binding</keyword>
<keyword id="KW-0699">rRNA-binding</keyword>
<keyword id="KW-0820">tRNA-binding</keyword>
<accession>B7I7R9</accession>
<proteinExistence type="evidence at protein level"/>